<organism>
    <name type="scientific">Solanum tuberosum</name>
    <name type="common">Potato</name>
    <dbReference type="NCBI Taxonomy" id="4113"/>
    <lineage>
        <taxon>Eukaryota</taxon>
        <taxon>Viridiplantae</taxon>
        <taxon>Streptophyta</taxon>
        <taxon>Embryophyta</taxon>
        <taxon>Tracheophyta</taxon>
        <taxon>Spermatophyta</taxon>
        <taxon>Magnoliopsida</taxon>
        <taxon>eudicotyledons</taxon>
        <taxon>Gunneridae</taxon>
        <taxon>Pentapetalae</taxon>
        <taxon>asterids</taxon>
        <taxon>lamiids</taxon>
        <taxon>Solanales</taxon>
        <taxon>Solanaceae</taxon>
        <taxon>Solanoideae</taxon>
        <taxon>Solaneae</taxon>
        <taxon>Solanum</taxon>
    </lineage>
</organism>
<protein>
    <recommendedName>
        <fullName>Patatin-01</fullName>
        <ecNumber>3.1.1.-</ecNumber>
    </recommendedName>
</protein>
<reference key="1">
    <citation type="journal article" date="2006" name="Genetics">
        <title>Structural diversity and differential transcription of the patatin multicopy gene family during potato tuber development.</title>
        <authorList>
            <person name="Stupar R.M."/>
            <person name="Beaubien K.A."/>
            <person name="Jin W."/>
            <person name="Song J."/>
            <person name="Lee M.-K."/>
            <person name="Wu C."/>
            <person name="Zhang H.-B."/>
            <person name="Han B."/>
            <person name="Jiang J."/>
        </authorList>
    </citation>
    <scope>NUCLEOTIDE SEQUENCE [MRNA]</scope>
    <scope>DEVELOPMENTAL STAGE</scope>
    <scope>TISSUE SPECIFICITY</scope>
    <source>
        <strain>cv. Kennebec</strain>
    </source>
</reference>
<comment type="function">
    <text evidence="1">Probable lipolytic acyl hydrolase (LAH), an activity which is thought to be involved in the response of tubers to pathogens.</text>
</comment>
<comment type="subcellular location">
    <subcellularLocation>
        <location evidence="1">Vacuole</location>
    </subcellularLocation>
</comment>
<comment type="tissue specificity">
    <text evidence="4">Tuber.</text>
</comment>
<comment type="developmental stage">
    <text evidence="4">Accumulates progressively during tuber formation from stolon.</text>
</comment>
<comment type="domain">
    <text>The nitrogen atoms of the two glycine residues in the GGXR motif define the oxyanion hole, and stabilize the oxyanion that forms during the nucleophilic attack by the catalytic serine during substrate cleavage.</text>
</comment>
<comment type="miscellaneous">
    <text>Patatin have a dual role as a somatic storage protein and as an enzyme involved in host resistance.</text>
</comment>
<comment type="similarity">
    <text evidence="5">Belongs to the patatin family.</text>
</comment>
<proteinExistence type="evidence at transcript level"/>
<accession>Q2MY50</accession>
<dbReference type="EC" id="3.1.1.-"/>
<dbReference type="EMBL" id="DQ274488">
    <property type="protein sequence ID" value="ABC55688.1"/>
    <property type="molecule type" value="mRNA"/>
</dbReference>
<dbReference type="SMR" id="Q2MY50"/>
<dbReference type="STRING" id="4113.Q2MY50"/>
<dbReference type="InParanoid" id="Q2MY50"/>
<dbReference type="Proteomes" id="UP000011115">
    <property type="component" value="Unassembled WGS sequence"/>
</dbReference>
<dbReference type="ExpressionAtlas" id="Q2MY50">
    <property type="expression patterns" value="baseline and differential"/>
</dbReference>
<dbReference type="GO" id="GO:0005773">
    <property type="term" value="C:vacuole"/>
    <property type="evidence" value="ECO:0007669"/>
    <property type="project" value="UniProtKB-SubCell"/>
</dbReference>
<dbReference type="GO" id="GO:0047372">
    <property type="term" value="F:monoacylglycerol lipase activity"/>
    <property type="evidence" value="ECO:0000318"/>
    <property type="project" value="GO_Central"/>
</dbReference>
<dbReference type="GO" id="GO:0045735">
    <property type="term" value="F:nutrient reservoir activity"/>
    <property type="evidence" value="ECO:0007669"/>
    <property type="project" value="UniProtKB-KW"/>
</dbReference>
<dbReference type="GO" id="GO:0004620">
    <property type="term" value="F:phospholipase activity"/>
    <property type="evidence" value="ECO:0000318"/>
    <property type="project" value="GO_Central"/>
</dbReference>
<dbReference type="GO" id="GO:0006952">
    <property type="term" value="P:defense response"/>
    <property type="evidence" value="ECO:0007669"/>
    <property type="project" value="UniProtKB-KW"/>
</dbReference>
<dbReference type="GO" id="GO:0016042">
    <property type="term" value="P:lipid catabolic process"/>
    <property type="evidence" value="ECO:0007669"/>
    <property type="project" value="UniProtKB-KW"/>
</dbReference>
<dbReference type="Gene3D" id="3.40.1090.10">
    <property type="entry name" value="Cytosolic phospholipase A2 catalytic domain"/>
    <property type="match status" value="1"/>
</dbReference>
<dbReference type="InterPro" id="IPR016035">
    <property type="entry name" value="Acyl_Trfase/lysoPLipase"/>
</dbReference>
<dbReference type="InterPro" id="IPR002641">
    <property type="entry name" value="PNPLA_dom"/>
</dbReference>
<dbReference type="PANTHER" id="PTHR32176:SF85">
    <property type="entry name" value="PATATIN GROUP D-2"/>
    <property type="match status" value="1"/>
</dbReference>
<dbReference type="PANTHER" id="PTHR32176">
    <property type="entry name" value="XYLOSE ISOMERASE"/>
    <property type="match status" value="1"/>
</dbReference>
<dbReference type="Pfam" id="PF01734">
    <property type="entry name" value="Patatin"/>
    <property type="match status" value="1"/>
</dbReference>
<dbReference type="SUPFAM" id="SSF52151">
    <property type="entry name" value="FabD/lysophospholipase-like"/>
    <property type="match status" value="1"/>
</dbReference>
<dbReference type="PROSITE" id="PS51635">
    <property type="entry name" value="PNPLA"/>
    <property type="match status" value="1"/>
</dbReference>
<evidence type="ECO:0000250" key="1"/>
<evidence type="ECO:0000255" key="2"/>
<evidence type="ECO:0000255" key="3">
    <source>
        <dbReference type="PROSITE-ProRule" id="PRU01161"/>
    </source>
</evidence>
<evidence type="ECO:0000269" key="4">
    <source>
    </source>
</evidence>
<evidence type="ECO:0000305" key="5"/>
<name>PAT01_SOLTU</name>
<keyword id="KW-0175">Coiled coil</keyword>
<keyword id="KW-0325">Glycoprotein</keyword>
<keyword id="KW-0378">Hydrolase</keyword>
<keyword id="KW-0442">Lipid degradation</keyword>
<keyword id="KW-0443">Lipid metabolism</keyword>
<keyword id="KW-0611">Plant defense</keyword>
<keyword id="KW-1185">Reference proteome</keyword>
<keyword id="KW-0732">Signal</keyword>
<keyword id="KW-0758">Storage protein</keyword>
<keyword id="KW-0926">Vacuole</keyword>
<sequence length="387" mass="42608">MATTKSFLILSVMILATTSSTFASLEEMVTVLSIDGGGIKGIIPGTILEFLEGQLQKMDNNADARLADYFDVIGGTSTGGLLTAMITTPNENNRPFAAANEIVPFYFEHGPHIFNSSTGQFFGPKYDGKYLMQVLQEKLGETRVHQALTEVAISSFDIKTNKPVIFTKSNLAKSPELDAKMYDICYSTAAAPTYFPPHYFATNTINGDKYEFNLVDGAVATVADPALLSVSVATRRAQEDPAFASIRSLNYKKMLLLSLGTGTTSEFDKTHTAEETAKWGALQWMLVIQQMTEAASSYMTDYYLSTVFQDLHSQNNYLRVQENALTGTTTKADDASEANMELLAQVGENLLKKPVSKDNPETYEEALKRFAKLLSDRKKLRANKASY</sequence>
<feature type="signal peptide" evidence="2">
    <location>
        <begin position="1"/>
        <end position="23"/>
    </location>
</feature>
<feature type="chain" id="PRO_0000296687" description="Patatin-01">
    <location>
        <begin position="24"/>
        <end position="387"/>
    </location>
</feature>
<feature type="domain" description="PNPLA" evidence="3">
    <location>
        <begin position="32"/>
        <end position="230"/>
    </location>
</feature>
<feature type="coiled-coil region" evidence="2">
    <location>
        <begin position="361"/>
        <end position="385"/>
    </location>
</feature>
<feature type="short sequence motif" description="GXGXXG" evidence="3">
    <location>
        <begin position="36"/>
        <end position="41"/>
    </location>
</feature>
<feature type="short sequence motif" description="GXSXG" evidence="3">
    <location>
        <begin position="75"/>
        <end position="79"/>
    </location>
</feature>
<feature type="short sequence motif" description="DGA/G" evidence="3">
    <location>
        <begin position="216"/>
        <end position="218"/>
    </location>
</feature>
<feature type="active site" description="Nucleophile" evidence="3">
    <location>
        <position position="77"/>
    </location>
</feature>
<feature type="active site" description="Proton acceptor" evidence="3">
    <location>
        <position position="216"/>
    </location>
</feature>
<feature type="glycosylation site" description="N-linked (GlcNAc...) asparagine" evidence="2">
    <location>
        <position position="115"/>
    </location>
</feature>